<name>WAPA_STRMU</name>
<comment type="subcellular location">
    <subcellularLocation>
        <location evidence="1">Secreted</location>
        <location evidence="1">Cell wall</location>
        <topology evidence="1">Peptidoglycan-anchor</topology>
    </subcellularLocation>
</comment>
<sequence length="453" mass="48900">MKMKRKLLSLVSVLTILLGAFWVTKIVKADQVTNYTNTASITKSDGTALSNDPSKAVNYWEPLSFSNSITFPDEVSIKAGDTLTIKLPEQLQFTTALTFDVMHTNGQLAGKATTDPNTGEVTVTFTDIFEKLPNDKAMTLNFNAQLNHNNISIPGVVNFNYNNVAYSSYVKDKDITPISPDVNKVGYQDKSNPGLIHWKVLINNKQGAIDNLTLTDVVGEDQEIVKDSLVAARLQYIAGDDVDSLDEAASRPYAEDFSKNVTYQTNDLGLTTGFTYTIPGSSNNAIFISYTTRLTSSQSAGKDVSNTIAISGNNINYSNQTGYARIESAYGRASSRVKRQAETTTVTETTTSSSSETTTSEATTETSSTTNNNSTTTETATSTTGASTTQTKTTASQTNVPTTTNITTTSKQVTKQKAKFVLPSTGEQAGLLLTTVGLVIVAVAGVYFYRTRR</sequence>
<protein>
    <recommendedName>
        <fullName>Wall-associated protein</fullName>
    </recommendedName>
</protein>
<dbReference type="EMBL" id="M37842">
    <property type="protein sequence ID" value="AAA88608.1"/>
    <property type="molecule type" value="Genomic_DNA"/>
</dbReference>
<dbReference type="EMBL" id="AE014133">
    <property type="protein sequence ID" value="AAN58688.1"/>
    <property type="molecule type" value="Genomic_DNA"/>
</dbReference>
<dbReference type="PIR" id="S06992">
    <property type="entry name" value="S06992"/>
</dbReference>
<dbReference type="RefSeq" id="NP_721382.1">
    <property type="nucleotide sequence ID" value="NC_004350.2"/>
</dbReference>
<dbReference type="RefSeq" id="WP_002262850.1">
    <property type="nucleotide sequence ID" value="NC_004350.2"/>
</dbReference>
<dbReference type="SMR" id="P11000"/>
<dbReference type="STRING" id="210007.SMU_987"/>
<dbReference type="KEGG" id="smu:SMU_987"/>
<dbReference type="PATRIC" id="fig|210007.7.peg.880"/>
<dbReference type="eggNOG" id="COG4932">
    <property type="taxonomic scope" value="Bacteria"/>
</dbReference>
<dbReference type="HOGENOM" id="CLU_002287_5_0_9"/>
<dbReference type="OrthoDB" id="2210709at2"/>
<dbReference type="PhylomeDB" id="P11000"/>
<dbReference type="Proteomes" id="UP000002512">
    <property type="component" value="Chromosome"/>
</dbReference>
<dbReference type="GO" id="GO:0005576">
    <property type="term" value="C:extracellular region"/>
    <property type="evidence" value="ECO:0007669"/>
    <property type="project" value="UniProtKB-KW"/>
</dbReference>
<dbReference type="GO" id="GO:0005518">
    <property type="term" value="F:collagen binding"/>
    <property type="evidence" value="ECO:0007669"/>
    <property type="project" value="InterPro"/>
</dbReference>
<dbReference type="GO" id="GO:0007155">
    <property type="term" value="P:cell adhesion"/>
    <property type="evidence" value="ECO:0007669"/>
    <property type="project" value="InterPro"/>
</dbReference>
<dbReference type="Gene3D" id="2.60.40.1280">
    <property type="match status" value="1"/>
</dbReference>
<dbReference type="Gene3D" id="2.60.40.740">
    <property type="match status" value="1"/>
</dbReference>
<dbReference type="InterPro" id="IPR008966">
    <property type="entry name" value="Adhesion_dom_sf"/>
</dbReference>
<dbReference type="InterPro" id="IPR008456">
    <property type="entry name" value="Collagen-bd_dom"/>
</dbReference>
<dbReference type="InterPro" id="IPR011252">
    <property type="entry name" value="Fibrogen-bd_dom1"/>
</dbReference>
<dbReference type="InterPro" id="IPR019931">
    <property type="entry name" value="LPXTG_anchor"/>
</dbReference>
<dbReference type="InterPro" id="IPR041171">
    <property type="entry name" value="SDR_Ig"/>
</dbReference>
<dbReference type="NCBIfam" id="TIGR01167">
    <property type="entry name" value="LPXTG_anchor"/>
    <property type="match status" value="1"/>
</dbReference>
<dbReference type="Pfam" id="PF17961">
    <property type="entry name" value="Big_8"/>
    <property type="match status" value="1"/>
</dbReference>
<dbReference type="Pfam" id="PF05737">
    <property type="entry name" value="Collagen_bind"/>
    <property type="match status" value="1"/>
</dbReference>
<dbReference type="Pfam" id="PF00746">
    <property type="entry name" value="Gram_pos_anchor"/>
    <property type="match status" value="1"/>
</dbReference>
<dbReference type="SUPFAM" id="SSF49401">
    <property type="entry name" value="Bacterial adhesins"/>
    <property type="match status" value="2"/>
</dbReference>
<dbReference type="PROSITE" id="PS50847">
    <property type="entry name" value="GRAM_POS_ANCHORING"/>
    <property type="match status" value="1"/>
</dbReference>
<accession>P11000</accession>
<feature type="signal peptide">
    <location>
        <begin position="1"/>
        <end position="29"/>
    </location>
</feature>
<feature type="chain" id="PRO_0000005673" description="Wall-associated protein">
    <location>
        <begin position="30"/>
        <end position="425"/>
    </location>
</feature>
<feature type="propeptide" id="PRO_0000005674" description="Removed by sortase" evidence="1">
    <location>
        <begin position="426"/>
        <end position="453"/>
    </location>
</feature>
<feature type="region of interest" description="Disordered" evidence="2">
    <location>
        <begin position="331"/>
        <end position="403"/>
    </location>
</feature>
<feature type="short sequence motif" description="LPXTG sorting signal" evidence="1">
    <location>
        <begin position="422"/>
        <end position="426"/>
    </location>
</feature>
<feature type="compositionally biased region" description="Low complexity" evidence="2">
    <location>
        <begin position="342"/>
        <end position="403"/>
    </location>
</feature>
<feature type="modified residue" description="Pentaglycyl murein peptidoglycan amidated threonine" evidence="1">
    <location>
        <position position="425"/>
    </location>
</feature>
<feature type="sequence conflict" description="In Ref. 1." evidence="3" ref="1">
    <location>
        <begin position="353"/>
        <end position="360"/>
    </location>
</feature>
<gene>
    <name type="primary">wapA</name>
    <name type="ordered locus">SMU_987</name>
</gene>
<evidence type="ECO:0000255" key="1">
    <source>
        <dbReference type="PROSITE-ProRule" id="PRU00477"/>
    </source>
</evidence>
<evidence type="ECO:0000256" key="2">
    <source>
        <dbReference type="SAM" id="MobiDB-lite"/>
    </source>
</evidence>
<evidence type="ECO:0000305" key="3"/>
<organism>
    <name type="scientific">Streptococcus mutans serotype c (strain ATCC 700610 / UA159)</name>
    <dbReference type="NCBI Taxonomy" id="210007"/>
    <lineage>
        <taxon>Bacteria</taxon>
        <taxon>Bacillati</taxon>
        <taxon>Bacillota</taxon>
        <taxon>Bacilli</taxon>
        <taxon>Lactobacillales</taxon>
        <taxon>Streptococcaceae</taxon>
        <taxon>Streptococcus</taxon>
    </lineage>
</organism>
<keyword id="KW-0134">Cell wall</keyword>
<keyword id="KW-0572">Peptidoglycan-anchor</keyword>
<keyword id="KW-1185">Reference proteome</keyword>
<keyword id="KW-0964">Secreted</keyword>
<keyword id="KW-0732">Signal</keyword>
<reference key="1">
    <citation type="journal article" date="1989" name="Mol. Microbiol.">
        <title>Sequence analysis of the wall-associated protein precursor of Streptococcus mutans antigen A.</title>
        <authorList>
            <person name="Ferretti J.J."/>
            <person name="Russell R.R.B."/>
            <person name="Dao M.L."/>
        </authorList>
    </citation>
    <scope>NUCLEOTIDE SEQUENCE [GENOMIC DNA]</scope>
</reference>
<reference key="2">
    <citation type="journal article" date="2002" name="Proc. Natl. Acad. Sci. U.S.A.">
        <title>Genome sequence of Streptococcus mutans UA159, a cariogenic dental pathogen.</title>
        <authorList>
            <person name="Ajdic D.J."/>
            <person name="McShan W.M."/>
            <person name="McLaughlin R.E."/>
            <person name="Savic G."/>
            <person name="Chang J."/>
            <person name="Carson M.B."/>
            <person name="Primeaux C."/>
            <person name="Tian R."/>
            <person name="Kenton S."/>
            <person name="Jia H.G."/>
            <person name="Lin S.P."/>
            <person name="Qian Y."/>
            <person name="Li S."/>
            <person name="Zhu H."/>
            <person name="Najar F.Z."/>
            <person name="Lai H."/>
            <person name="White J."/>
            <person name="Roe B.A."/>
            <person name="Ferretti J.J."/>
        </authorList>
    </citation>
    <scope>NUCLEOTIDE SEQUENCE [LARGE SCALE GENOMIC DNA]</scope>
    <source>
        <strain>ATCC 700610 / UA159</strain>
    </source>
</reference>
<proteinExistence type="inferred from homology"/>